<gene>
    <name evidence="1" type="primary">rpmG</name>
    <name type="ordered locus">LPC_2866</name>
</gene>
<feature type="chain" id="PRO_0000356522" description="Large ribosomal subunit protein bL33">
    <location>
        <begin position="1"/>
        <end position="54"/>
    </location>
</feature>
<organism>
    <name type="scientific">Legionella pneumophila (strain Corby)</name>
    <dbReference type="NCBI Taxonomy" id="400673"/>
    <lineage>
        <taxon>Bacteria</taxon>
        <taxon>Pseudomonadati</taxon>
        <taxon>Pseudomonadota</taxon>
        <taxon>Gammaproteobacteria</taxon>
        <taxon>Legionellales</taxon>
        <taxon>Legionellaceae</taxon>
        <taxon>Legionella</taxon>
    </lineage>
</organism>
<dbReference type="EMBL" id="CP000675">
    <property type="protein sequence ID" value="ABQ56767.1"/>
    <property type="molecule type" value="Genomic_DNA"/>
</dbReference>
<dbReference type="RefSeq" id="WP_003635328.1">
    <property type="nucleotide sequence ID" value="NZ_JAPMSS010000006.1"/>
</dbReference>
<dbReference type="SMR" id="A5IHB7"/>
<dbReference type="GeneID" id="98066954"/>
<dbReference type="KEGG" id="lpc:LPC_2866"/>
<dbReference type="HOGENOM" id="CLU_190949_1_1_6"/>
<dbReference type="GO" id="GO:0005737">
    <property type="term" value="C:cytoplasm"/>
    <property type="evidence" value="ECO:0007669"/>
    <property type="project" value="UniProtKB-ARBA"/>
</dbReference>
<dbReference type="GO" id="GO:0015934">
    <property type="term" value="C:large ribosomal subunit"/>
    <property type="evidence" value="ECO:0007669"/>
    <property type="project" value="TreeGrafter"/>
</dbReference>
<dbReference type="GO" id="GO:0003735">
    <property type="term" value="F:structural constituent of ribosome"/>
    <property type="evidence" value="ECO:0007669"/>
    <property type="project" value="InterPro"/>
</dbReference>
<dbReference type="GO" id="GO:0006412">
    <property type="term" value="P:translation"/>
    <property type="evidence" value="ECO:0007669"/>
    <property type="project" value="UniProtKB-UniRule"/>
</dbReference>
<dbReference type="Gene3D" id="2.20.28.120">
    <property type="entry name" value="Ribosomal protein L33"/>
    <property type="match status" value="1"/>
</dbReference>
<dbReference type="HAMAP" id="MF_00294">
    <property type="entry name" value="Ribosomal_bL33"/>
    <property type="match status" value="1"/>
</dbReference>
<dbReference type="InterPro" id="IPR001705">
    <property type="entry name" value="Ribosomal_bL33"/>
</dbReference>
<dbReference type="InterPro" id="IPR038584">
    <property type="entry name" value="Ribosomal_bL33_sf"/>
</dbReference>
<dbReference type="InterPro" id="IPR011332">
    <property type="entry name" value="Ribosomal_zn-bd"/>
</dbReference>
<dbReference type="NCBIfam" id="NF001860">
    <property type="entry name" value="PRK00595.1"/>
    <property type="match status" value="1"/>
</dbReference>
<dbReference type="NCBIfam" id="TIGR01023">
    <property type="entry name" value="rpmG_bact"/>
    <property type="match status" value="1"/>
</dbReference>
<dbReference type="PANTHER" id="PTHR15238">
    <property type="entry name" value="54S RIBOSOMAL PROTEIN L39, MITOCHONDRIAL"/>
    <property type="match status" value="1"/>
</dbReference>
<dbReference type="PANTHER" id="PTHR15238:SF1">
    <property type="entry name" value="LARGE RIBOSOMAL SUBUNIT PROTEIN BL33M"/>
    <property type="match status" value="1"/>
</dbReference>
<dbReference type="Pfam" id="PF00471">
    <property type="entry name" value="Ribosomal_L33"/>
    <property type="match status" value="1"/>
</dbReference>
<dbReference type="SUPFAM" id="SSF57829">
    <property type="entry name" value="Zn-binding ribosomal proteins"/>
    <property type="match status" value="1"/>
</dbReference>
<proteinExistence type="inferred from homology"/>
<name>RL33_LEGPC</name>
<reference key="1">
    <citation type="submission" date="2006-11" db="EMBL/GenBank/DDBJ databases">
        <title>Identification and characterization of a new conjugation/ type IVA secretion system (trb/tra) of L. pneumophila Corby localized on a mobile genomic island.</title>
        <authorList>
            <person name="Gloeckner G."/>
            <person name="Albert-Weissenberger C."/>
            <person name="Weinmann E."/>
            <person name="Jacobi S."/>
            <person name="Schunder E."/>
            <person name="Steinert M."/>
            <person name="Buchrieser C."/>
            <person name="Hacker J."/>
            <person name="Heuner K."/>
        </authorList>
    </citation>
    <scope>NUCLEOTIDE SEQUENCE [LARGE SCALE GENOMIC DNA]</scope>
    <source>
        <strain>Corby</strain>
    </source>
</reference>
<accession>A5IHB7</accession>
<evidence type="ECO:0000255" key="1">
    <source>
        <dbReference type="HAMAP-Rule" id="MF_00294"/>
    </source>
</evidence>
<evidence type="ECO:0000305" key="2"/>
<comment type="similarity">
    <text evidence="1">Belongs to the bacterial ribosomal protein bL33 family.</text>
</comment>
<protein>
    <recommendedName>
        <fullName evidence="1">Large ribosomal subunit protein bL33</fullName>
    </recommendedName>
    <alternativeName>
        <fullName evidence="2">50S ribosomal protein L33</fullName>
    </alternativeName>
</protein>
<keyword id="KW-0687">Ribonucleoprotein</keyword>
<keyword id="KW-0689">Ribosomal protein</keyword>
<sequence>MAAVTIKVKMESTAGTGYYKTTTKNPRNHPEKMELMMYDPKVRKHVLFKEKKVK</sequence>